<keyword id="KW-0143">Chaperone</keyword>
<keyword id="KW-1185">Reference proteome</keyword>
<protein>
    <recommendedName>
        <fullName evidence="1">Co-chaperone protein HscB</fullName>
    </recommendedName>
    <alternativeName>
        <fullName evidence="1">Hsc20</fullName>
    </alternativeName>
</protein>
<comment type="function">
    <text evidence="1">Co-chaperone involved in the maturation of iron-sulfur cluster-containing proteins. Seems to help targeting proteins to be folded toward HscA.</text>
</comment>
<comment type="subunit">
    <text evidence="1">Interacts with HscA and stimulates its ATPase activity. Interacts with IscU.</text>
</comment>
<comment type="similarity">
    <text evidence="1">Belongs to the HscB family.</text>
</comment>
<sequence>MDYFTLFGLPARYQLDTQALSLRFQDLQRQYHPDKFASGSQAEQLAAVQQSATINQAWQTLRHPLMRAEYLLSLHGFDLASEQHTVRDTAFLMEQLELREELDEIEQAKDEARLESFIKRVKKMFDTRHQLMVEQLDNETWDAAADTVRKLRFLDKLRSSAEQLEEKLLDF</sequence>
<proteinExistence type="inferred from homology"/>
<dbReference type="EMBL" id="FM180568">
    <property type="protein sequence ID" value="CAS10358.1"/>
    <property type="molecule type" value="Genomic_DNA"/>
</dbReference>
<dbReference type="RefSeq" id="WP_000384413.1">
    <property type="nucleotide sequence ID" value="NC_011601.1"/>
</dbReference>
<dbReference type="SMR" id="B7UGX3"/>
<dbReference type="GeneID" id="75172640"/>
<dbReference type="KEGG" id="ecg:E2348C_2810"/>
<dbReference type="HOGENOM" id="CLU_068529_2_0_6"/>
<dbReference type="Proteomes" id="UP000008205">
    <property type="component" value="Chromosome"/>
</dbReference>
<dbReference type="GO" id="GO:1990230">
    <property type="term" value="C:iron-sulfur cluster transfer complex"/>
    <property type="evidence" value="ECO:0007669"/>
    <property type="project" value="TreeGrafter"/>
</dbReference>
<dbReference type="GO" id="GO:0001671">
    <property type="term" value="F:ATPase activator activity"/>
    <property type="evidence" value="ECO:0007669"/>
    <property type="project" value="InterPro"/>
</dbReference>
<dbReference type="GO" id="GO:0051087">
    <property type="term" value="F:protein-folding chaperone binding"/>
    <property type="evidence" value="ECO:0007669"/>
    <property type="project" value="InterPro"/>
</dbReference>
<dbReference type="GO" id="GO:0044571">
    <property type="term" value="P:[2Fe-2S] cluster assembly"/>
    <property type="evidence" value="ECO:0007669"/>
    <property type="project" value="InterPro"/>
</dbReference>
<dbReference type="GO" id="GO:0051259">
    <property type="term" value="P:protein complex oligomerization"/>
    <property type="evidence" value="ECO:0007669"/>
    <property type="project" value="InterPro"/>
</dbReference>
<dbReference type="GO" id="GO:0006457">
    <property type="term" value="P:protein folding"/>
    <property type="evidence" value="ECO:0007669"/>
    <property type="project" value="UniProtKB-UniRule"/>
</dbReference>
<dbReference type="CDD" id="cd06257">
    <property type="entry name" value="DnaJ"/>
    <property type="match status" value="1"/>
</dbReference>
<dbReference type="FunFam" id="1.10.287.110:FF:000008">
    <property type="entry name" value="Co-chaperone protein HscB"/>
    <property type="match status" value="1"/>
</dbReference>
<dbReference type="FunFam" id="1.20.1280.20:FF:000001">
    <property type="entry name" value="Co-chaperone protein HscB"/>
    <property type="match status" value="1"/>
</dbReference>
<dbReference type="Gene3D" id="1.10.287.110">
    <property type="entry name" value="DnaJ domain"/>
    <property type="match status" value="1"/>
</dbReference>
<dbReference type="Gene3D" id="1.20.1280.20">
    <property type="entry name" value="HscB, C-terminal domain"/>
    <property type="match status" value="1"/>
</dbReference>
<dbReference type="HAMAP" id="MF_00682">
    <property type="entry name" value="HscB"/>
    <property type="match status" value="1"/>
</dbReference>
<dbReference type="InterPro" id="IPR001623">
    <property type="entry name" value="DnaJ_domain"/>
</dbReference>
<dbReference type="InterPro" id="IPR004640">
    <property type="entry name" value="HscB"/>
</dbReference>
<dbReference type="InterPro" id="IPR036386">
    <property type="entry name" value="HscB_C_sf"/>
</dbReference>
<dbReference type="InterPro" id="IPR009073">
    <property type="entry name" value="HscB_oligo_C"/>
</dbReference>
<dbReference type="InterPro" id="IPR036869">
    <property type="entry name" value="J_dom_sf"/>
</dbReference>
<dbReference type="NCBIfam" id="TIGR00714">
    <property type="entry name" value="hscB"/>
    <property type="match status" value="1"/>
</dbReference>
<dbReference type="NCBIfam" id="NF003449">
    <property type="entry name" value="PRK05014.1"/>
    <property type="match status" value="1"/>
</dbReference>
<dbReference type="PANTHER" id="PTHR14021">
    <property type="entry name" value="IRON-SULFUR CLUSTER CO-CHAPERONE PROTEIN HSCB"/>
    <property type="match status" value="1"/>
</dbReference>
<dbReference type="PANTHER" id="PTHR14021:SF15">
    <property type="entry name" value="IRON-SULFUR CLUSTER CO-CHAPERONE PROTEIN HSCB"/>
    <property type="match status" value="1"/>
</dbReference>
<dbReference type="Pfam" id="PF07743">
    <property type="entry name" value="HSCB_C"/>
    <property type="match status" value="1"/>
</dbReference>
<dbReference type="SMART" id="SM00271">
    <property type="entry name" value="DnaJ"/>
    <property type="match status" value="1"/>
</dbReference>
<dbReference type="SUPFAM" id="SSF46565">
    <property type="entry name" value="Chaperone J-domain"/>
    <property type="match status" value="1"/>
</dbReference>
<dbReference type="SUPFAM" id="SSF47144">
    <property type="entry name" value="HSC20 (HSCB), C-terminal oligomerisation domain"/>
    <property type="match status" value="1"/>
</dbReference>
<dbReference type="PROSITE" id="PS50076">
    <property type="entry name" value="DNAJ_2"/>
    <property type="match status" value="1"/>
</dbReference>
<name>HSCB_ECO27</name>
<feature type="chain" id="PRO_1000189913" description="Co-chaperone protein HscB">
    <location>
        <begin position="1"/>
        <end position="171"/>
    </location>
</feature>
<feature type="domain" description="J" evidence="1">
    <location>
        <begin position="2"/>
        <end position="74"/>
    </location>
</feature>
<organism>
    <name type="scientific">Escherichia coli O127:H6 (strain E2348/69 / EPEC)</name>
    <dbReference type="NCBI Taxonomy" id="574521"/>
    <lineage>
        <taxon>Bacteria</taxon>
        <taxon>Pseudomonadati</taxon>
        <taxon>Pseudomonadota</taxon>
        <taxon>Gammaproteobacteria</taxon>
        <taxon>Enterobacterales</taxon>
        <taxon>Enterobacteriaceae</taxon>
        <taxon>Escherichia</taxon>
    </lineage>
</organism>
<reference key="1">
    <citation type="journal article" date="2009" name="J. Bacteriol.">
        <title>Complete genome sequence and comparative genome analysis of enteropathogenic Escherichia coli O127:H6 strain E2348/69.</title>
        <authorList>
            <person name="Iguchi A."/>
            <person name="Thomson N.R."/>
            <person name="Ogura Y."/>
            <person name="Saunders D."/>
            <person name="Ooka T."/>
            <person name="Henderson I.R."/>
            <person name="Harris D."/>
            <person name="Asadulghani M."/>
            <person name="Kurokawa K."/>
            <person name="Dean P."/>
            <person name="Kenny B."/>
            <person name="Quail M.A."/>
            <person name="Thurston S."/>
            <person name="Dougan G."/>
            <person name="Hayashi T."/>
            <person name="Parkhill J."/>
            <person name="Frankel G."/>
        </authorList>
    </citation>
    <scope>NUCLEOTIDE SEQUENCE [LARGE SCALE GENOMIC DNA]</scope>
    <source>
        <strain>E2348/69 / EPEC</strain>
    </source>
</reference>
<evidence type="ECO:0000255" key="1">
    <source>
        <dbReference type="HAMAP-Rule" id="MF_00682"/>
    </source>
</evidence>
<gene>
    <name evidence="1" type="primary">hscB</name>
    <name type="ordered locus">E2348C_2810</name>
</gene>
<accession>B7UGX3</accession>